<gene>
    <name evidence="1" type="primary">ndk</name>
    <name type="ordered locus">Smal_1656</name>
</gene>
<organism>
    <name type="scientific">Stenotrophomonas maltophilia (strain R551-3)</name>
    <dbReference type="NCBI Taxonomy" id="391008"/>
    <lineage>
        <taxon>Bacteria</taxon>
        <taxon>Pseudomonadati</taxon>
        <taxon>Pseudomonadota</taxon>
        <taxon>Gammaproteobacteria</taxon>
        <taxon>Lysobacterales</taxon>
        <taxon>Lysobacteraceae</taxon>
        <taxon>Stenotrophomonas</taxon>
        <taxon>Stenotrophomonas maltophilia group</taxon>
    </lineage>
</organism>
<sequence length="141" mass="15324">MALERTLSIIKPDAVAKNVIGEIYARFEKAGLKVVAAKYKQLSRREAEGFYAVHRERPFFNALVEFMISGPVMIQALEGENAVLAHRDLLGATNPKEAAPGTIRADFAESIDANAAHGSDSVENAAIEIAYFFAATEVVSR</sequence>
<accession>B4SSW2</accession>
<protein>
    <recommendedName>
        <fullName evidence="1">Nucleoside diphosphate kinase</fullName>
        <shortName evidence="1">NDK</shortName>
        <shortName evidence="1">NDP kinase</shortName>
        <ecNumber evidence="1">2.7.4.6</ecNumber>
    </recommendedName>
    <alternativeName>
        <fullName evidence="1">Nucleoside-2-P kinase</fullName>
    </alternativeName>
</protein>
<evidence type="ECO:0000255" key="1">
    <source>
        <dbReference type="HAMAP-Rule" id="MF_00451"/>
    </source>
</evidence>
<feature type="chain" id="PRO_1000125021" description="Nucleoside diphosphate kinase">
    <location>
        <begin position="1"/>
        <end position="141"/>
    </location>
</feature>
<feature type="active site" description="Pros-phosphohistidine intermediate" evidence="1">
    <location>
        <position position="117"/>
    </location>
</feature>
<feature type="binding site" evidence="1">
    <location>
        <position position="11"/>
    </location>
    <ligand>
        <name>ATP</name>
        <dbReference type="ChEBI" id="CHEBI:30616"/>
    </ligand>
</feature>
<feature type="binding site" evidence="1">
    <location>
        <position position="59"/>
    </location>
    <ligand>
        <name>ATP</name>
        <dbReference type="ChEBI" id="CHEBI:30616"/>
    </ligand>
</feature>
<feature type="binding site" evidence="1">
    <location>
        <position position="87"/>
    </location>
    <ligand>
        <name>ATP</name>
        <dbReference type="ChEBI" id="CHEBI:30616"/>
    </ligand>
</feature>
<feature type="binding site" evidence="1">
    <location>
        <position position="93"/>
    </location>
    <ligand>
        <name>ATP</name>
        <dbReference type="ChEBI" id="CHEBI:30616"/>
    </ligand>
</feature>
<feature type="binding site" evidence="1">
    <location>
        <position position="104"/>
    </location>
    <ligand>
        <name>ATP</name>
        <dbReference type="ChEBI" id="CHEBI:30616"/>
    </ligand>
</feature>
<feature type="binding site" evidence="1">
    <location>
        <position position="114"/>
    </location>
    <ligand>
        <name>ATP</name>
        <dbReference type="ChEBI" id="CHEBI:30616"/>
    </ligand>
</feature>
<reference key="1">
    <citation type="submission" date="2008-06" db="EMBL/GenBank/DDBJ databases">
        <title>Complete sequence of Stenotrophomonas maltophilia R551-3.</title>
        <authorList>
            <consortium name="US DOE Joint Genome Institute"/>
            <person name="Lucas S."/>
            <person name="Copeland A."/>
            <person name="Lapidus A."/>
            <person name="Glavina del Rio T."/>
            <person name="Dalin E."/>
            <person name="Tice H."/>
            <person name="Pitluck S."/>
            <person name="Chain P."/>
            <person name="Malfatti S."/>
            <person name="Shin M."/>
            <person name="Vergez L."/>
            <person name="Lang D."/>
            <person name="Schmutz J."/>
            <person name="Larimer F."/>
            <person name="Land M."/>
            <person name="Hauser L."/>
            <person name="Kyrpides N."/>
            <person name="Mikhailova N."/>
            <person name="Taghavi S."/>
            <person name="Monchy S."/>
            <person name="Newman L."/>
            <person name="Vangronsveld J."/>
            <person name="van der Lelie D."/>
            <person name="Richardson P."/>
        </authorList>
    </citation>
    <scope>NUCLEOTIDE SEQUENCE [LARGE SCALE GENOMIC DNA]</scope>
    <source>
        <strain>R551-3</strain>
    </source>
</reference>
<keyword id="KW-0067">ATP-binding</keyword>
<keyword id="KW-0963">Cytoplasm</keyword>
<keyword id="KW-0418">Kinase</keyword>
<keyword id="KW-0460">Magnesium</keyword>
<keyword id="KW-0479">Metal-binding</keyword>
<keyword id="KW-0546">Nucleotide metabolism</keyword>
<keyword id="KW-0547">Nucleotide-binding</keyword>
<keyword id="KW-0597">Phosphoprotein</keyword>
<keyword id="KW-0808">Transferase</keyword>
<dbReference type="EC" id="2.7.4.6" evidence="1"/>
<dbReference type="EMBL" id="CP001111">
    <property type="protein sequence ID" value="ACF51361.1"/>
    <property type="molecule type" value="Genomic_DNA"/>
</dbReference>
<dbReference type="RefSeq" id="WP_005409295.1">
    <property type="nucleotide sequence ID" value="NC_011071.1"/>
</dbReference>
<dbReference type="SMR" id="B4SSW2"/>
<dbReference type="STRING" id="391008.Smal_1656"/>
<dbReference type="GeneID" id="97260818"/>
<dbReference type="KEGG" id="smt:Smal_1656"/>
<dbReference type="eggNOG" id="COG0105">
    <property type="taxonomic scope" value="Bacteria"/>
</dbReference>
<dbReference type="HOGENOM" id="CLU_060216_8_1_6"/>
<dbReference type="OrthoDB" id="9801161at2"/>
<dbReference type="Proteomes" id="UP000001867">
    <property type="component" value="Chromosome"/>
</dbReference>
<dbReference type="GO" id="GO:0005737">
    <property type="term" value="C:cytoplasm"/>
    <property type="evidence" value="ECO:0007669"/>
    <property type="project" value="UniProtKB-SubCell"/>
</dbReference>
<dbReference type="GO" id="GO:0005524">
    <property type="term" value="F:ATP binding"/>
    <property type="evidence" value="ECO:0007669"/>
    <property type="project" value="UniProtKB-UniRule"/>
</dbReference>
<dbReference type="GO" id="GO:0046872">
    <property type="term" value="F:metal ion binding"/>
    <property type="evidence" value="ECO:0007669"/>
    <property type="project" value="UniProtKB-KW"/>
</dbReference>
<dbReference type="GO" id="GO:0004550">
    <property type="term" value="F:nucleoside diphosphate kinase activity"/>
    <property type="evidence" value="ECO:0007669"/>
    <property type="project" value="UniProtKB-UniRule"/>
</dbReference>
<dbReference type="GO" id="GO:0006241">
    <property type="term" value="P:CTP biosynthetic process"/>
    <property type="evidence" value="ECO:0007669"/>
    <property type="project" value="UniProtKB-UniRule"/>
</dbReference>
<dbReference type="GO" id="GO:0006183">
    <property type="term" value="P:GTP biosynthetic process"/>
    <property type="evidence" value="ECO:0007669"/>
    <property type="project" value="UniProtKB-UniRule"/>
</dbReference>
<dbReference type="GO" id="GO:0006228">
    <property type="term" value="P:UTP biosynthetic process"/>
    <property type="evidence" value="ECO:0007669"/>
    <property type="project" value="UniProtKB-UniRule"/>
</dbReference>
<dbReference type="CDD" id="cd04413">
    <property type="entry name" value="NDPk_I"/>
    <property type="match status" value="1"/>
</dbReference>
<dbReference type="FunFam" id="3.30.70.141:FF:000001">
    <property type="entry name" value="Nucleoside diphosphate kinase"/>
    <property type="match status" value="1"/>
</dbReference>
<dbReference type="Gene3D" id="3.30.70.141">
    <property type="entry name" value="Nucleoside diphosphate kinase-like domain"/>
    <property type="match status" value="1"/>
</dbReference>
<dbReference type="HAMAP" id="MF_00451">
    <property type="entry name" value="NDP_kinase"/>
    <property type="match status" value="1"/>
</dbReference>
<dbReference type="InterPro" id="IPR034907">
    <property type="entry name" value="NDK-like_dom"/>
</dbReference>
<dbReference type="InterPro" id="IPR036850">
    <property type="entry name" value="NDK-like_dom_sf"/>
</dbReference>
<dbReference type="InterPro" id="IPR001564">
    <property type="entry name" value="Nucleoside_diP_kinase"/>
</dbReference>
<dbReference type="InterPro" id="IPR023005">
    <property type="entry name" value="Nucleoside_diP_kinase_AS"/>
</dbReference>
<dbReference type="NCBIfam" id="NF001908">
    <property type="entry name" value="PRK00668.1"/>
    <property type="match status" value="1"/>
</dbReference>
<dbReference type="PANTHER" id="PTHR11349">
    <property type="entry name" value="NUCLEOSIDE DIPHOSPHATE KINASE"/>
    <property type="match status" value="1"/>
</dbReference>
<dbReference type="Pfam" id="PF00334">
    <property type="entry name" value="NDK"/>
    <property type="match status" value="1"/>
</dbReference>
<dbReference type="PRINTS" id="PR01243">
    <property type="entry name" value="NUCDPKINASE"/>
</dbReference>
<dbReference type="SMART" id="SM00562">
    <property type="entry name" value="NDK"/>
    <property type="match status" value="1"/>
</dbReference>
<dbReference type="SUPFAM" id="SSF54919">
    <property type="entry name" value="Nucleoside diphosphate kinase, NDK"/>
    <property type="match status" value="1"/>
</dbReference>
<dbReference type="PROSITE" id="PS00469">
    <property type="entry name" value="NDPK"/>
    <property type="match status" value="1"/>
</dbReference>
<dbReference type="PROSITE" id="PS51374">
    <property type="entry name" value="NDPK_LIKE"/>
    <property type="match status" value="1"/>
</dbReference>
<proteinExistence type="inferred from homology"/>
<name>NDK_STRM5</name>
<comment type="function">
    <text evidence="1">Major role in the synthesis of nucleoside triphosphates other than ATP. The ATP gamma phosphate is transferred to the NDP beta phosphate via a ping-pong mechanism, using a phosphorylated active-site intermediate.</text>
</comment>
<comment type="catalytic activity">
    <reaction evidence="1">
        <text>a 2'-deoxyribonucleoside 5'-diphosphate + ATP = a 2'-deoxyribonucleoside 5'-triphosphate + ADP</text>
        <dbReference type="Rhea" id="RHEA:44640"/>
        <dbReference type="ChEBI" id="CHEBI:30616"/>
        <dbReference type="ChEBI" id="CHEBI:61560"/>
        <dbReference type="ChEBI" id="CHEBI:73316"/>
        <dbReference type="ChEBI" id="CHEBI:456216"/>
        <dbReference type="EC" id="2.7.4.6"/>
    </reaction>
</comment>
<comment type="catalytic activity">
    <reaction evidence="1">
        <text>a ribonucleoside 5'-diphosphate + ATP = a ribonucleoside 5'-triphosphate + ADP</text>
        <dbReference type="Rhea" id="RHEA:18113"/>
        <dbReference type="ChEBI" id="CHEBI:30616"/>
        <dbReference type="ChEBI" id="CHEBI:57930"/>
        <dbReference type="ChEBI" id="CHEBI:61557"/>
        <dbReference type="ChEBI" id="CHEBI:456216"/>
        <dbReference type="EC" id="2.7.4.6"/>
    </reaction>
</comment>
<comment type="cofactor">
    <cofactor evidence="1">
        <name>Mg(2+)</name>
        <dbReference type="ChEBI" id="CHEBI:18420"/>
    </cofactor>
</comment>
<comment type="subunit">
    <text evidence="1">Homotetramer.</text>
</comment>
<comment type="subcellular location">
    <subcellularLocation>
        <location evidence="1">Cytoplasm</location>
    </subcellularLocation>
</comment>
<comment type="similarity">
    <text evidence="1">Belongs to the NDK family.</text>
</comment>